<name>SMG_SALCH</name>
<dbReference type="EMBL" id="AE017220">
    <property type="protein sequence ID" value="AAX67246.1"/>
    <property type="molecule type" value="Genomic_DNA"/>
</dbReference>
<dbReference type="RefSeq" id="WP_000460663.1">
    <property type="nucleotide sequence ID" value="NC_006905.1"/>
</dbReference>
<dbReference type="SMR" id="Q57J66"/>
<dbReference type="KEGG" id="sec:SCH_3340"/>
<dbReference type="HOGENOM" id="CLU_133242_0_0_6"/>
<dbReference type="Proteomes" id="UP000000538">
    <property type="component" value="Chromosome"/>
</dbReference>
<dbReference type="HAMAP" id="MF_00598">
    <property type="entry name" value="Smg"/>
    <property type="match status" value="1"/>
</dbReference>
<dbReference type="InterPro" id="IPR007456">
    <property type="entry name" value="Smg"/>
</dbReference>
<dbReference type="NCBIfam" id="NF002897">
    <property type="entry name" value="PRK03430.1"/>
    <property type="match status" value="1"/>
</dbReference>
<dbReference type="PANTHER" id="PTHR38692">
    <property type="entry name" value="PROTEIN SMG"/>
    <property type="match status" value="1"/>
</dbReference>
<dbReference type="PANTHER" id="PTHR38692:SF1">
    <property type="entry name" value="PROTEIN SMG"/>
    <property type="match status" value="1"/>
</dbReference>
<dbReference type="Pfam" id="PF04361">
    <property type="entry name" value="DUF494"/>
    <property type="match status" value="1"/>
</dbReference>
<gene>
    <name evidence="1" type="primary">smg</name>
    <name type="ordered locus">SCH_3340</name>
</gene>
<feature type="chain" id="PRO_1000025661" description="Protein Smg">
    <location>
        <begin position="1"/>
        <end position="157"/>
    </location>
</feature>
<proteinExistence type="inferred from homology"/>
<comment type="similarity">
    <text evidence="1">Belongs to the Smg family.</text>
</comment>
<organism>
    <name type="scientific">Salmonella choleraesuis (strain SC-B67)</name>
    <dbReference type="NCBI Taxonomy" id="321314"/>
    <lineage>
        <taxon>Bacteria</taxon>
        <taxon>Pseudomonadati</taxon>
        <taxon>Pseudomonadota</taxon>
        <taxon>Gammaproteobacteria</taxon>
        <taxon>Enterobacterales</taxon>
        <taxon>Enterobacteriaceae</taxon>
        <taxon>Salmonella</taxon>
    </lineage>
</organism>
<sequence length="157" mass="18540">MFDVLMYLFETYIHNEAELRVDQDRLERDLTDAGFDREDIYNALLWLEKLADYQDGLAEPMQLASDPLSMRIYTVEECERLDASCRGFLLFLEQIQVLNLETREMVIERVLALDTAEFDLEDLKWVILMVLFNIPGCENAYQQMEELLFEVNEGMLH</sequence>
<protein>
    <recommendedName>
        <fullName evidence="1">Protein Smg</fullName>
    </recommendedName>
</protein>
<reference key="1">
    <citation type="journal article" date="2005" name="Nucleic Acids Res.">
        <title>The genome sequence of Salmonella enterica serovar Choleraesuis, a highly invasive and resistant zoonotic pathogen.</title>
        <authorList>
            <person name="Chiu C.-H."/>
            <person name="Tang P."/>
            <person name="Chu C."/>
            <person name="Hu S."/>
            <person name="Bao Q."/>
            <person name="Yu J."/>
            <person name="Chou Y.-Y."/>
            <person name="Wang H.-S."/>
            <person name="Lee Y.-S."/>
        </authorList>
    </citation>
    <scope>NUCLEOTIDE SEQUENCE [LARGE SCALE GENOMIC DNA]</scope>
    <source>
        <strain>SC-B67</strain>
    </source>
</reference>
<accession>Q57J66</accession>
<evidence type="ECO:0000255" key="1">
    <source>
        <dbReference type="HAMAP-Rule" id="MF_00598"/>
    </source>
</evidence>